<name>PRDM4_MOUSE</name>
<gene>
    <name type="primary">Prdm4</name>
</gene>
<feature type="chain" id="PRO_0000230792" description="PR domain zinc finger protein 4">
    <location>
        <begin position="1"/>
        <end position="803"/>
    </location>
</feature>
<feature type="domain" description="SET" evidence="3">
    <location>
        <begin position="408"/>
        <end position="532"/>
    </location>
</feature>
<feature type="zinc finger region" description="C2H2-type 1" evidence="2">
    <location>
        <begin position="593"/>
        <end position="615"/>
    </location>
</feature>
<feature type="zinc finger region" description="C2H2-type 2" evidence="2">
    <location>
        <begin position="621"/>
        <end position="643"/>
    </location>
</feature>
<feature type="zinc finger region" description="C2H2-type 3" evidence="2">
    <location>
        <begin position="649"/>
        <end position="671"/>
    </location>
</feature>
<feature type="zinc finger region" description="C2H2-type 4" evidence="2">
    <location>
        <begin position="677"/>
        <end position="699"/>
    </location>
</feature>
<feature type="zinc finger region" description="C2H2-type 5" evidence="2">
    <location>
        <begin position="705"/>
        <end position="727"/>
    </location>
</feature>
<feature type="zinc finger region" description="C2H2-type 6; degenerate" evidence="2">
    <location>
        <begin position="733"/>
        <end position="755"/>
    </location>
</feature>
<feature type="region of interest" description="Disordered" evidence="4">
    <location>
        <begin position="757"/>
        <end position="803"/>
    </location>
</feature>
<feature type="compositionally biased region" description="Acidic residues" evidence="4">
    <location>
        <begin position="765"/>
        <end position="778"/>
    </location>
</feature>
<feature type="compositionally biased region" description="Polar residues" evidence="4">
    <location>
        <begin position="792"/>
        <end position="803"/>
    </location>
</feature>
<dbReference type="EC" id="2.1.1.-"/>
<dbReference type="EMBL" id="BC042516">
    <property type="protein sequence ID" value="AAH42516.1"/>
    <property type="status" value="ALT_INIT"/>
    <property type="molecule type" value="mRNA"/>
</dbReference>
<dbReference type="EMBL" id="BC139409">
    <property type="protein sequence ID" value="AAI39410.1"/>
    <property type="molecule type" value="mRNA"/>
</dbReference>
<dbReference type="CCDS" id="CCDS24093.1"/>
<dbReference type="RefSeq" id="NP_857633.2">
    <property type="nucleotide sequence ID" value="NM_181650.3"/>
</dbReference>
<dbReference type="RefSeq" id="XP_006514256.1">
    <property type="nucleotide sequence ID" value="XM_006514193.3"/>
</dbReference>
<dbReference type="RefSeq" id="XP_006514257.1">
    <property type="nucleotide sequence ID" value="XM_006514194.4"/>
</dbReference>
<dbReference type="RefSeq" id="XP_011241884.1">
    <property type="nucleotide sequence ID" value="XM_011243582.2"/>
</dbReference>
<dbReference type="SMR" id="Q80V63"/>
<dbReference type="BioGRID" id="215601">
    <property type="interactions" value="32"/>
</dbReference>
<dbReference type="FunCoup" id="Q80V63">
    <property type="interactions" value="3951"/>
</dbReference>
<dbReference type="STRING" id="10090.ENSMUSP00000151931"/>
<dbReference type="PhosphoSitePlus" id="Q80V63"/>
<dbReference type="PaxDb" id="10090-ENSMUSP00000041942"/>
<dbReference type="ProteomicsDB" id="289839"/>
<dbReference type="Antibodypedia" id="18264">
    <property type="antibodies" value="294 antibodies from 31 providers"/>
</dbReference>
<dbReference type="DNASU" id="72843"/>
<dbReference type="Ensembl" id="ENSMUST00000220032.2">
    <property type="protein sequence ID" value="ENSMUSP00000151931.2"/>
    <property type="gene ID" value="ENSMUSG00000035529.11"/>
</dbReference>
<dbReference type="GeneID" id="72843"/>
<dbReference type="KEGG" id="mmu:72843"/>
<dbReference type="UCSC" id="uc011xkq.1">
    <property type="organism name" value="mouse"/>
</dbReference>
<dbReference type="AGR" id="MGI:1920093"/>
<dbReference type="CTD" id="11108"/>
<dbReference type="MGI" id="MGI:1920093">
    <property type="gene designation" value="Prdm4"/>
</dbReference>
<dbReference type="VEuPathDB" id="HostDB:ENSMUSG00000035529"/>
<dbReference type="eggNOG" id="KOG1721">
    <property type="taxonomic scope" value="Eukaryota"/>
</dbReference>
<dbReference type="eggNOG" id="KOG2461">
    <property type="taxonomic scope" value="Eukaryota"/>
</dbReference>
<dbReference type="GeneTree" id="ENSGT00940000156443"/>
<dbReference type="HOGENOM" id="CLU_019772_0_0_1"/>
<dbReference type="InParanoid" id="Q80V63"/>
<dbReference type="OMA" id="QTGPHEL"/>
<dbReference type="OrthoDB" id="654211at2759"/>
<dbReference type="PhylomeDB" id="Q80V63"/>
<dbReference type="TreeFam" id="TF332513"/>
<dbReference type="BioGRID-ORCS" id="72843">
    <property type="hits" value="4 hits in 80 CRISPR screens"/>
</dbReference>
<dbReference type="ChiTaRS" id="Prdm4">
    <property type="organism name" value="mouse"/>
</dbReference>
<dbReference type="PRO" id="PR:Q80V63"/>
<dbReference type="Proteomes" id="UP000000589">
    <property type="component" value="Chromosome 10"/>
</dbReference>
<dbReference type="RNAct" id="Q80V63">
    <property type="molecule type" value="protein"/>
</dbReference>
<dbReference type="Bgee" id="ENSMUSG00000035529">
    <property type="expression patterns" value="Expressed in embryonic post-anal tail and 232 other cell types or tissues"/>
</dbReference>
<dbReference type="ExpressionAtlas" id="Q80V63">
    <property type="expression patterns" value="baseline and differential"/>
</dbReference>
<dbReference type="GO" id="GO:0005737">
    <property type="term" value="C:cytoplasm"/>
    <property type="evidence" value="ECO:0000314"/>
    <property type="project" value="ParkinsonsUK-UCL"/>
</dbReference>
<dbReference type="GO" id="GO:0035097">
    <property type="term" value="C:histone methyltransferase complex"/>
    <property type="evidence" value="ECO:0000353"/>
    <property type="project" value="ParkinsonsUK-UCL"/>
</dbReference>
<dbReference type="GO" id="GO:0005634">
    <property type="term" value="C:nucleus"/>
    <property type="evidence" value="ECO:0000314"/>
    <property type="project" value="ParkinsonsUK-UCL"/>
</dbReference>
<dbReference type="GO" id="GO:0001228">
    <property type="term" value="F:DNA-binding transcription activator activity, RNA polymerase II-specific"/>
    <property type="evidence" value="ECO:0000315"/>
    <property type="project" value="NTNU_SB"/>
</dbReference>
<dbReference type="GO" id="GO:1990226">
    <property type="term" value="F:histone methyltransferase binding"/>
    <property type="evidence" value="ECO:0000353"/>
    <property type="project" value="ParkinsonsUK-UCL"/>
</dbReference>
<dbReference type="GO" id="GO:0008168">
    <property type="term" value="F:methyltransferase activity"/>
    <property type="evidence" value="ECO:0007669"/>
    <property type="project" value="UniProtKB-KW"/>
</dbReference>
<dbReference type="GO" id="GO:0000978">
    <property type="term" value="F:RNA polymerase II cis-regulatory region sequence-specific DNA binding"/>
    <property type="evidence" value="ECO:0000315"/>
    <property type="project" value="NTNU_SB"/>
</dbReference>
<dbReference type="GO" id="GO:0008270">
    <property type="term" value="F:zinc ion binding"/>
    <property type="evidence" value="ECO:0007669"/>
    <property type="project" value="UniProtKB-KW"/>
</dbReference>
<dbReference type="GO" id="GO:0032259">
    <property type="term" value="P:methylation"/>
    <property type="evidence" value="ECO:0007669"/>
    <property type="project" value="UniProtKB-KW"/>
</dbReference>
<dbReference type="GO" id="GO:0045944">
    <property type="term" value="P:positive regulation of transcription by RNA polymerase II"/>
    <property type="evidence" value="ECO:0000315"/>
    <property type="project" value="NTNU_SB"/>
</dbReference>
<dbReference type="GO" id="GO:0006366">
    <property type="term" value="P:transcription by RNA polymerase II"/>
    <property type="evidence" value="ECO:0007669"/>
    <property type="project" value="InterPro"/>
</dbReference>
<dbReference type="CDD" id="cd19189">
    <property type="entry name" value="PR-SET_PRDM4"/>
    <property type="match status" value="1"/>
</dbReference>
<dbReference type="FunFam" id="2.170.270.10:FF:000022">
    <property type="entry name" value="PR domain zinc finger protein 4"/>
    <property type="match status" value="1"/>
</dbReference>
<dbReference type="FunFam" id="3.30.160.60:FF:000436">
    <property type="entry name" value="PR domain zinc finger protein 4"/>
    <property type="match status" value="1"/>
</dbReference>
<dbReference type="FunFam" id="3.30.160.60:FF:000723">
    <property type="entry name" value="PR domain zinc finger protein 4"/>
    <property type="match status" value="1"/>
</dbReference>
<dbReference type="FunFam" id="3.30.160.60:FF:000840">
    <property type="entry name" value="PR domain zinc finger protein 4"/>
    <property type="match status" value="1"/>
</dbReference>
<dbReference type="FunFam" id="3.30.160.60:FF:000922">
    <property type="entry name" value="PR domain zinc finger protein 4"/>
    <property type="match status" value="1"/>
</dbReference>
<dbReference type="Gene3D" id="3.30.160.60">
    <property type="entry name" value="Classic Zinc Finger"/>
    <property type="match status" value="5"/>
</dbReference>
<dbReference type="Gene3D" id="2.170.270.10">
    <property type="entry name" value="SET domain"/>
    <property type="match status" value="1"/>
</dbReference>
<dbReference type="InterPro" id="IPR017124">
    <property type="entry name" value="PRDM4"/>
</dbReference>
<dbReference type="InterPro" id="IPR044404">
    <property type="entry name" value="PRDM4_PR/SET"/>
</dbReference>
<dbReference type="InterPro" id="IPR041493">
    <property type="entry name" value="PRDM4_Znf"/>
</dbReference>
<dbReference type="InterPro" id="IPR001214">
    <property type="entry name" value="SET_dom"/>
</dbReference>
<dbReference type="InterPro" id="IPR046341">
    <property type="entry name" value="SET_dom_sf"/>
</dbReference>
<dbReference type="InterPro" id="IPR050331">
    <property type="entry name" value="Zinc_finger"/>
</dbReference>
<dbReference type="InterPro" id="IPR036236">
    <property type="entry name" value="Znf_C2H2_sf"/>
</dbReference>
<dbReference type="InterPro" id="IPR013087">
    <property type="entry name" value="Znf_C2H2_type"/>
</dbReference>
<dbReference type="PANTHER" id="PTHR16515">
    <property type="entry name" value="PR DOMAIN ZINC FINGER PROTEIN"/>
    <property type="match status" value="1"/>
</dbReference>
<dbReference type="PANTHER" id="PTHR16515:SF2">
    <property type="entry name" value="PR DOMAIN ZINC FINGER PROTEIN 4"/>
    <property type="match status" value="1"/>
</dbReference>
<dbReference type="Pfam" id="PF21549">
    <property type="entry name" value="PRDM2_PR"/>
    <property type="match status" value="1"/>
</dbReference>
<dbReference type="Pfam" id="PF00096">
    <property type="entry name" value="zf-C2H2"/>
    <property type="match status" value="3"/>
</dbReference>
<dbReference type="Pfam" id="PF18445">
    <property type="entry name" value="Zn_ribbon_PRDM4"/>
    <property type="match status" value="1"/>
</dbReference>
<dbReference type="PIRSF" id="PIRSF037161">
    <property type="entry name" value="PRDM4"/>
    <property type="match status" value="1"/>
</dbReference>
<dbReference type="SMART" id="SM00355">
    <property type="entry name" value="ZnF_C2H2"/>
    <property type="match status" value="7"/>
</dbReference>
<dbReference type="SUPFAM" id="SSF57667">
    <property type="entry name" value="beta-beta-alpha zinc fingers"/>
    <property type="match status" value="3"/>
</dbReference>
<dbReference type="PROSITE" id="PS50280">
    <property type="entry name" value="SET"/>
    <property type="match status" value="1"/>
</dbReference>
<dbReference type="PROSITE" id="PS00028">
    <property type="entry name" value="ZINC_FINGER_C2H2_1"/>
    <property type="match status" value="5"/>
</dbReference>
<dbReference type="PROSITE" id="PS50157">
    <property type="entry name" value="ZINC_FINGER_C2H2_2"/>
    <property type="match status" value="6"/>
</dbReference>
<evidence type="ECO:0000250" key="1"/>
<evidence type="ECO:0000255" key="2">
    <source>
        <dbReference type="PROSITE-ProRule" id="PRU00042"/>
    </source>
</evidence>
<evidence type="ECO:0000255" key="3">
    <source>
        <dbReference type="PROSITE-ProRule" id="PRU00190"/>
    </source>
</evidence>
<evidence type="ECO:0000256" key="4">
    <source>
        <dbReference type="SAM" id="MobiDB-lite"/>
    </source>
</evidence>
<evidence type="ECO:0000305" key="5"/>
<protein>
    <recommendedName>
        <fullName>PR domain zinc finger protein 4</fullName>
        <ecNumber>2.1.1.-</ecNumber>
    </recommendedName>
    <alternativeName>
        <fullName>PR domain-containing protein 4</fullName>
    </alternativeName>
</protein>
<reference key="1">
    <citation type="journal article" date="2004" name="Genome Res.">
        <title>The status, quality, and expansion of the NIH full-length cDNA project: the Mammalian Gene Collection (MGC).</title>
        <authorList>
            <consortium name="The MGC Project Team"/>
        </authorList>
    </citation>
    <scope>NUCLEOTIDE SEQUENCE [LARGE SCALE MRNA]</scope>
    <source>
        <strain>FVB/N</strain>
        <tissue>Brain</tissue>
        <tissue>Mammary tumor</tissue>
    </source>
</reference>
<organism>
    <name type="scientific">Mus musculus</name>
    <name type="common">Mouse</name>
    <dbReference type="NCBI Taxonomy" id="10090"/>
    <lineage>
        <taxon>Eukaryota</taxon>
        <taxon>Metazoa</taxon>
        <taxon>Chordata</taxon>
        <taxon>Craniata</taxon>
        <taxon>Vertebrata</taxon>
        <taxon>Euteleostomi</taxon>
        <taxon>Mammalia</taxon>
        <taxon>Eutheria</taxon>
        <taxon>Euarchontoglires</taxon>
        <taxon>Glires</taxon>
        <taxon>Rodentia</taxon>
        <taxon>Myomorpha</taxon>
        <taxon>Muroidea</taxon>
        <taxon>Muridae</taxon>
        <taxon>Murinae</taxon>
        <taxon>Mus</taxon>
        <taxon>Mus</taxon>
    </lineage>
</organism>
<accession>Q80V63</accession>
<accession>B2RTL4</accession>
<proteinExistence type="evidence at transcript level"/>
<sequence length="803" mass="88145">MNDMNLSPVGMEQLSSSSVSNALPVSGSHLGLAASPSHSAIPAPGLPVAIPNLGPSLSSLPSALSLMLPVGIGDRGVMCGLPERNYTLPPPPYPHLESSYFRTILPGILSYLADRPPPQYIHPNSINVDGNTALSITNNPSALDPYQANGNVGLELGIVSIDSRSVNTHGAQSLHPNDGHEVALDTTITMENVSRVTSPISTDGMAEELTMDGVTGEHPQIPNGSRSHEPLSVDSVSNSLTAEAVGHGGVIPIHGNGLELPVVMETDHIANRVNGMSDSTLSDSIHTVAMSTNSVSVALSTSHNLASLESVSLHEVGLSLEPVAVSSITQEVAMGTGHVDVSSDSLSFVPSSLQMEDSNSNKENMATLFTIWCTLCDRAYPSDCPDHGPVTFVPDTPIESRARLSLPKQLVLRQSIVGTDVVGVLPLIGVWTAETIPVRTCFGPLIGQQSHSLEVAEWTDKAVNHVWKIYHTGVLEFCIITTDENECNWMMFVRKARNREEQNLVAYPHDGKIYFCTSQDIPPESELLFYYSRNYAQQIGVPEHPDVHLCNCGKECSSYSEFKAHLTSHIHNHLPSQGHSSSHGPSHSKERKWKCSMCPQAFISPSKLHVHFMGHMGMKPHKCDFCSKAFSDPSNLRTHLKIHTGQKNYRCTLCDKSFTQKAHLESHMVIHTGEKNLKCDYCDKLFMRRQDLKQHVLIHTQERQIKCPKCDKLFLRTNHLKKHLNSHEGKRDYVCEKCTKAYLTKYHLTRHLKTCKEPSSSSSAQEEEDDESEEEDLADSMRTEDCRMGSAVYSTDESLSAHK</sequence>
<keyword id="KW-0238">DNA-binding</keyword>
<keyword id="KW-0479">Metal-binding</keyword>
<keyword id="KW-0489">Methyltransferase</keyword>
<keyword id="KW-0539">Nucleus</keyword>
<keyword id="KW-1185">Reference proteome</keyword>
<keyword id="KW-0677">Repeat</keyword>
<keyword id="KW-0949">S-adenosyl-L-methionine</keyword>
<keyword id="KW-0804">Transcription</keyword>
<keyword id="KW-0805">Transcription regulation</keyword>
<keyword id="KW-0808">Transferase</keyword>
<keyword id="KW-0862">Zinc</keyword>
<keyword id="KW-0863">Zinc-finger</keyword>
<comment type="function">
    <text evidence="1">May function as a transcription factor involved in cell differentiation.</text>
</comment>
<comment type="subcellular location">
    <subcellularLocation>
        <location evidence="5">Nucleus</location>
    </subcellularLocation>
</comment>
<comment type="similarity">
    <text evidence="3">Belongs to the class V-like SAM-binding methyltransferase superfamily.</text>
</comment>
<comment type="sequence caution" evidence="5">
    <conflict type="erroneous initiation">
        <sequence resource="EMBL-CDS" id="AAH42516"/>
    </conflict>
</comment>